<accession>Q9LBE7</accession>
<reference key="1">
    <citation type="journal article" date="2001" name="FEMS Microbiol. Lett.">
        <title>CbbR, a LysR-type transcriptional regulator from Hydrogenophilus thermoluteolus, binds two cbb promoter regions.</title>
        <authorList>
            <person name="Terazono K."/>
            <person name="Hayashi N.R."/>
            <person name="Igarashi Y."/>
        </authorList>
    </citation>
    <scope>NUCLEOTIDE SEQUENCE [GENOMIC DNA]</scope>
    <source>
        <strain>TH-1 / NBRC 14978</strain>
    </source>
</reference>
<proteinExistence type="inferred from homology"/>
<dbReference type="EC" id="3.1.3.11" evidence="1"/>
<dbReference type="EMBL" id="AB042620">
    <property type="protein sequence ID" value="BAA95689.1"/>
    <property type="molecule type" value="Genomic_DNA"/>
</dbReference>
<dbReference type="RefSeq" id="WP_119334873.1">
    <property type="nucleotide sequence ID" value="NZ_AP018558.1"/>
</dbReference>
<dbReference type="SMR" id="Q9LBE7"/>
<dbReference type="OrthoDB" id="9806756at2"/>
<dbReference type="UniPathway" id="UPA00138"/>
<dbReference type="GO" id="GO:0005829">
    <property type="term" value="C:cytosol"/>
    <property type="evidence" value="ECO:0007669"/>
    <property type="project" value="TreeGrafter"/>
</dbReference>
<dbReference type="GO" id="GO:0042132">
    <property type="term" value="F:fructose 1,6-bisphosphate 1-phosphatase activity"/>
    <property type="evidence" value="ECO:0007669"/>
    <property type="project" value="UniProtKB-UniRule"/>
</dbReference>
<dbReference type="GO" id="GO:0000287">
    <property type="term" value="F:magnesium ion binding"/>
    <property type="evidence" value="ECO:0007669"/>
    <property type="project" value="UniProtKB-UniRule"/>
</dbReference>
<dbReference type="GO" id="GO:0030388">
    <property type="term" value="P:fructose 1,6-bisphosphate metabolic process"/>
    <property type="evidence" value="ECO:0007669"/>
    <property type="project" value="TreeGrafter"/>
</dbReference>
<dbReference type="GO" id="GO:0006002">
    <property type="term" value="P:fructose 6-phosphate metabolic process"/>
    <property type="evidence" value="ECO:0007669"/>
    <property type="project" value="TreeGrafter"/>
</dbReference>
<dbReference type="GO" id="GO:0006000">
    <property type="term" value="P:fructose metabolic process"/>
    <property type="evidence" value="ECO:0007669"/>
    <property type="project" value="TreeGrafter"/>
</dbReference>
<dbReference type="GO" id="GO:0006094">
    <property type="term" value="P:gluconeogenesis"/>
    <property type="evidence" value="ECO:0007669"/>
    <property type="project" value="UniProtKB-UniRule"/>
</dbReference>
<dbReference type="GO" id="GO:0005986">
    <property type="term" value="P:sucrose biosynthetic process"/>
    <property type="evidence" value="ECO:0007669"/>
    <property type="project" value="TreeGrafter"/>
</dbReference>
<dbReference type="CDD" id="cd00354">
    <property type="entry name" value="FBPase"/>
    <property type="match status" value="1"/>
</dbReference>
<dbReference type="FunFam" id="3.30.540.10:FF:000002">
    <property type="entry name" value="Fructose-1,6-bisphosphatase class 1"/>
    <property type="match status" value="1"/>
</dbReference>
<dbReference type="FunFam" id="3.40.190.80:FF:000011">
    <property type="entry name" value="Fructose-1,6-bisphosphatase class 1"/>
    <property type="match status" value="1"/>
</dbReference>
<dbReference type="Gene3D" id="3.40.190.80">
    <property type="match status" value="1"/>
</dbReference>
<dbReference type="Gene3D" id="3.30.540.10">
    <property type="entry name" value="Fructose-1,6-Bisphosphatase, subunit A, domain 1"/>
    <property type="match status" value="1"/>
</dbReference>
<dbReference type="HAMAP" id="MF_01855">
    <property type="entry name" value="FBPase_class1"/>
    <property type="match status" value="1"/>
</dbReference>
<dbReference type="InterPro" id="IPR044015">
    <property type="entry name" value="FBPase_C_dom"/>
</dbReference>
<dbReference type="InterPro" id="IPR000146">
    <property type="entry name" value="FBPase_class-1"/>
</dbReference>
<dbReference type="InterPro" id="IPR033391">
    <property type="entry name" value="FBPase_N"/>
</dbReference>
<dbReference type="InterPro" id="IPR028343">
    <property type="entry name" value="FBPtase"/>
</dbReference>
<dbReference type="InterPro" id="IPR020548">
    <property type="entry name" value="Fructose_bisphosphatase_AS"/>
</dbReference>
<dbReference type="NCBIfam" id="NF006778">
    <property type="entry name" value="PRK09293.1-1"/>
    <property type="match status" value="1"/>
</dbReference>
<dbReference type="NCBIfam" id="NF006779">
    <property type="entry name" value="PRK09293.1-3"/>
    <property type="match status" value="1"/>
</dbReference>
<dbReference type="NCBIfam" id="NF006780">
    <property type="entry name" value="PRK09293.1-4"/>
    <property type="match status" value="1"/>
</dbReference>
<dbReference type="PANTHER" id="PTHR11556">
    <property type="entry name" value="FRUCTOSE-1,6-BISPHOSPHATASE-RELATED"/>
    <property type="match status" value="1"/>
</dbReference>
<dbReference type="PANTHER" id="PTHR11556:SF35">
    <property type="entry name" value="SEDOHEPTULOSE-1,7-BISPHOSPHATASE, CHLOROPLASTIC"/>
    <property type="match status" value="1"/>
</dbReference>
<dbReference type="Pfam" id="PF00316">
    <property type="entry name" value="FBPase"/>
    <property type="match status" value="1"/>
</dbReference>
<dbReference type="Pfam" id="PF18913">
    <property type="entry name" value="FBPase_C"/>
    <property type="match status" value="1"/>
</dbReference>
<dbReference type="PIRSF" id="PIRSF500210">
    <property type="entry name" value="FBPtase"/>
    <property type="match status" value="1"/>
</dbReference>
<dbReference type="PIRSF" id="PIRSF000904">
    <property type="entry name" value="FBPtase_SBPase"/>
    <property type="match status" value="1"/>
</dbReference>
<dbReference type="PRINTS" id="PR00115">
    <property type="entry name" value="F16BPHPHTASE"/>
</dbReference>
<dbReference type="SUPFAM" id="SSF56655">
    <property type="entry name" value="Carbohydrate phosphatase"/>
    <property type="match status" value="1"/>
</dbReference>
<dbReference type="PROSITE" id="PS00124">
    <property type="entry name" value="FBPASE"/>
    <property type="match status" value="1"/>
</dbReference>
<evidence type="ECO:0000255" key="1">
    <source>
        <dbReference type="HAMAP-Rule" id="MF_01855"/>
    </source>
</evidence>
<keyword id="KW-0119">Carbohydrate metabolism</keyword>
<keyword id="KW-0963">Cytoplasm</keyword>
<keyword id="KW-0378">Hydrolase</keyword>
<keyword id="KW-0460">Magnesium</keyword>
<keyword id="KW-0479">Metal-binding</keyword>
<name>F16PA_HYDTE</name>
<sequence length="359" mass="40255">MSWAHTPTLTQYLIEERRRYPQASGDFNALILDMARACKAIARQVAYGALAKSNHAVTTTINVQGEEQKPLDVISNECFMRLTEWGGYLAAMASEEMDEPYLIPEQYPRGRYLLLFDPLDGSSNIDVNVSVGSIFSVLRAPEGKTEITVDDFLQPGTQQVAAGYAIYGPTTMLVLTVGRGVVGFTLDPDFGEFMLTHPNIRIPESTKEFAINTSNARFWEPPVKRYVDECLKGKTGPRGKDFNMRWVASLVAETHRILSRGGVFLYPRDNKEPKKPGRLRLLYECNPIGMIVEQAGGRASTGYGPVLEVQPTELHQRIGFVFGSREEVERIEQYHNDPDASPVDLPLFAERTLFRDETL</sequence>
<gene>
    <name evidence="1" type="primary">fbp</name>
</gene>
<feature type="chain" id="PRO_0000364646" description="Fructose-1,6-bisphosphatase class 1">
    <location>
        <begin position="1"/>
        <end position="359"/>
    </location>
</feature>
<feature type="binding site" evidence="1">
    <location>
        <position position="95"/>
    </location>
    <ligand>
        <name>Mg(2+)</name>
        <dbReference type="ChEBI" id="CHEBI:18420"/>
        <label>1</label>
    </ligand>
</feature>
<feature type="binding site" evidence="1">
    <location>
        <position position="117"/>
    </location>
    <ligand>
        <name>Mg(2+)</name>
        <dbReference type="ChEBI" id="CHEBI:18420"/>
        <label>1</label>
    </ligand>
</feature>
<feature type="binding site" evidence="1">
    <location>
        <position position="117"/>
    </location>
    <ligand>
        <name>Mg(2+)</name>
        <dbReference type="ChEBI" id="CHEBI:18420"/>
        <label>2</label>
    </ligand>
</feature>
<feature type="binding site" evidence="1">
    <location>
        <position position="119"/>
    </location>
    <ligand>
        <name>Mg(2+)</name>
        <dbReference type="ChEBI" id="CHEBI:18420"/>
        <label>1</label>
    </ligand>
</feature>
<feature type="binding site" evidence="1">
    <location>
        <begin position="120"/>
        <end position="123"/>
    </location>
    <ligand>
        <name>substrate</name>
    </ligand>
</feature>
<feature type="binding site" evidence="1">
    <location>
        <position position="120"/>
    </location>
    <ligand>
        <name>Mg(2+)</name>
        <dbReference type="ChEBI" id="CHEBI:18420"/>
        <label>2</label>
    </ligand>
</feature>
<feature type="binding site" evidence="1">
    <location>
        <position position="212"/>
    </location>
    <ligand>
        <name>substrate</name>
    </ligand>
</feature>
<feature type="binding site" evidence="1">
    <location>
        <position position="284"/>
    </location>
    <ligand>
        <name>Mg(2+)</name>
        <dbReference type="ChEBI" id="CHEBI:18420"/>
        <label>2</label>
    </ligand>
</feature>
<protein>
    <recommendedName>
        <fullName evidence="1">Fructose-1,6-bisphosphatase class 1</fullName>
        <shortName evidence="1">FBPase class 1</shortName>
        <ecNumber evidence="1">3.1.3.11</ecNumber>
    </recommendedName>
    <alternativeName>
        <fullName evidence="1">D-fructose-1,6-bisphosphate 1-phosphohydrolase class 1</fullName>
    </alternativeName>
</protein>
<organism>
    <name type="scientific">Hydrogenophilus thermoluteolus</name>
    <name type="common">Pseudomonas hydrogenothermophila</name>
    <dbReference type="NCBI Taxonomy" id="297"/>
    <lineage>
        <taxon>Bacteria</taxon>
        <taxon>Pseudomonadati</taxon>
        <taxon>Pseudomonadota</taxon>
        <taxon>Hydrogenophilia</taxon>
        <taxon>Hydrogenophilales</taxon>
        <taxon>Hydrogenophilaceae</taxon>
        <taxon>Hydrogenophilus</taxon>
    </lineage>
</organism>
<comment type="catalytic activity">
    <reaction evidence="1">
        <text>beta-D-fructose 1,6-bisphosphate + H2O = beta-D-fructose 6-phosphate + phosphate</text>
        <dbReference type="Rhea" id="RHEA:11064"/>
        <dbReference type="ChEBI" id="CHEBI:15377"/>
        <dbReference type="ChEBI" id="CHEBI:32966"/>
        <dbReference type="ChEBI" id="CHEBI:43474"/>
        <dbReference type="ChEBI" id="CHEBI:57634"/>
        <dbReference type="EC" id="3.1.3.11"/>
    </reaction>
</comment>
<comment type="cofactor">
    <cofactor evidence="1">
        <name>Mg(2+)</name>
        <dbReference type="ChEBI" id="CHEBI:18420"/>
    </cofactor>
    <text evidence="1">Binds 2 magnesium ions per subunit.</text>
</comment>
<comment type="pathway">
    <text evidence="1">Carbohydrate biosynthesis; gluconeogenesis.</text>
</comment>
<comment type="subunit">
    <text evidence="1">Homotetramer.</text>
</comment>
<comment type="subcellular location">
    <subcellularLocation>
        <location evidence="1">Cytoplasm</location>
    </subcellularLocation>
</comment>
<comment type="similarity">
    <text evidence="1">Belongs to the FBPase class 1 family.</text>
</comment>